<feature type="chain" id="PRO_0000266304" description="Guanylate kinase">
    <location>
        <begin position="1"/>
        <end position="204"/>
    </location>
</feature>
<feature type="domain" description="Guanylate kinase-like" evidence="1">
    <location>
        <begin position="18"/>
        <end position="196"/>
    </location>
</feature>
<feature type="binding site" evidence="1">
    <location>
        <begin position="25"/>
        <end position="32"/>
    </location>
    <ligand>
        <name>ATP</name>
        <dbReference type="ChEBI" id="CHEBI:30616"/>
    </ligand>
</feature>
<keyword id="KW-0067">ATP-binding</keyword>
<keyword id="KW-0963">Cytoplasm</keyword>
<keyword id="KW-0418">Kinase</keyword>
<keyword id="KW-0547">Nucleotide-binding</keyword>
<keyword id="KW-0808">Transferase</keyword>
<organism>
    <name type="scientific">Chlamydia felis (strain Fe/C-56)</name>
    <name type="common">Chlamydophila felis</name>
    <dbReference type="NCBI Taxonomy" id="264202"/>
    <lineage>
        <taxon>Bacteria</taxon>
        <taxon>Pseudomonadati</taxon>
        <taxon>Chlamydiota</taxon>
        <taxon>Chlamydiia</taxon>
        <taxon>Chlamydiales</taxon>
        <taxon>Chlamydiaceae</taxon>
        <taxon>Chlamydia/Chlamydophila group</taxon>
        <taxon>Chlamydia</taxon>
    </lineage>
</organism>
<reference key="1">
    <citation type="journal article" date="2006" name="DNA Res.">
        <title>Genome sequence of the cat pathogen, Chlamydophila felis.</title>
        <authorList>
            <person name="Azuma Y."/>
            <person name="Hirakawa H."/>
            <person name="Yamashita A."/>
            <person name="Cai Y."/>
            <person name="Rahman M.A."/>
            <person name="Suzuki H."/>
            <person name="Mitaku S."/>
            <person name="Toh H."/>
            <person name="Goto S."/>
            <person name="Murakami T."/>
            <person name="Sugi K."/>
            <person name="Hayashi H."/>
            <person name="Fukushi H."/>
            <person name="Hattori M."/>
            <person name="Kuhara S."/>
            <person name="Shirai M."/>
        </authorList>
    </citation>
    <scope>NUCLEOTIDE SEQUENCE [LARGE SCALE GENOMIC DNA]</scope>
    <source>
        <strain>Fe/C-56</strain>
    </source>
</reference>
<dbReference type="EC" id="2.7.4.8" evidence="1"/>
<dbReference type="EMBL" id="AP006861">
    <property type="protein sequence ID" value="BAE81130.1"/>
    <property type="molecule type" value="Genomic_DNA"/>
</dbReference>
<dbReference type="RefSeq" id="WP_011457910.1">
    <property type="nucleotide sequence ID" value="NC_007899.1"/>
</dbReference>
<dbReference type="SMR" id="Q255A8"/>
<dbReference type="STRING" id="264202.CF0358"/>
<dbReference type="KEGG" id="cfe:CF0358"/>
<dbReference type="eggNOG" id="COG0194">
    <property type="taxonomic scope" value="Bacteria"/>
</dbReference>
<dbReference type="HOGENOM" id="CLU_001715_1_1_0"/>
<dbReference type="OrthoDB" id="9808150at2"/>
<dbReference type="Proteomes" id="UP000001260">
    <property type="component" value="Chromosome"/>
</dbReference>
<dbReference type="GO" id="GO:0005829">
    <property type="term" value="C:cytosol"/>
    <property type="evidence" value="ECO:0007669"/>
    <property type="project" value="TreeGrafter"/>
</dbReference>
<dbReference type="GO" id="GO:0005524">
    <property type="term" value="F:ATP binding"/>
    <property type="evidence" value="ECO:0007669"/>
    <property type="project" value="UniProtKB-UniRule"/>
</dbReference>
<dbReference type="GO" id="GO:0004385">
    <property type="term" value="F:guanylate kinase activity"/>
    <property type="evidence" value="ECO:0007669"/>
    <property type="project" value="UniProtKB-UniRule"/>
</dbReference>
<dbReference type="CDD" id="cd00071">
    <property type="entry name" value="GMPK"/>
    <property type="match status" value="1"/>
</dbReference>
<dbReference type="FunFam" id="3.30.63.10:FF:000005">
    <property type="entry name" value="Guanylate kinase"/>
    <property type="match status" value="1"/>
</dbReference>
<dbReference type="Gene3D" id="3.40.50.300">
    <property type="entry name" value="P-loop containing nucleotide triphosphate hydrolases"/>
    <property type="match status" value="1"/>
</dbReference>
<dbReference type="HAMAP" id="MF_00328">
    <property type="entry name" value="Guanylate_kinase"/>
    <property type="match status" value="1"/>
</dbReference>
<dbReference type="InterPro" id="IPR008145">
    <property type="entry name" value="GK/Ca_channel_bsu"/>
</dbReference>
<dbReference type="InterPro" id="IPR008144">
    <property type="entry name" value="Guanylate_kin-like_dom"/>
</dbReference>
<dbReference type="InterPro" id="IPR017665">
    <property type="entry name" value="Guanylate_kinase"/>
</dbReference>
<dbReference type="InterPro" id="IPR020590">
    <property type="entry name" value="Guanylate_kinase_CS"/>
</dbReference>
<dbReference type="InterPro" id="IPR027417">
    <property type="entry name" value="P-loop_NTPase"/>
</dbReference>
<dbReference type="NCBIfam" id="TIGR03263">
    <property type="entry name" value="guanyl_kin"/>
    <property type="match status" value="1"/>
</dbReference>
<dbReference type="PANTHER" id="PTHR23117:SF13">
    <property type="entry name" value="GUANYLATE KINASE"/>
    <property type="match status" value="1"/>
</dbReference>
<dbReference type="PANTHER" id="PTHR23117">
    <property type="entry name" value="GUANYLATE KINASE-RELATED"/>
    <property type="match status" value="1"/>
</dbReference>
<dbReference type="Pfam" id="PF00625">
    <property type="entry name" value="Guanylate_kin"/>
    <property type="match status" value="1"/>
</dbReference>
<dbReference type="SMART" id="SM00072">
    <property type="entry name" value="GuKc"/>
    <property type="match status" value="1"/>
</dbReference>
<dbReference type="SUPFAM" id="SSF52540">
    <property type="entry name" value="P-loop containing nucleoside triphosphate hydrolases"/>
    <property type="match status" value="1"/>
</dbReference>
<dbReference type="PROSITE" id="PS00856">
    <property type="entry name" value="GUANYLATE_KINASE_1"/>
    <property type="match status" value="1"/>
</dbReference>
<dbReference type="PROSITE" id="PS50052">
    <property type="entry name" value="GUANYLATE_KINASE_2"/>
    <property type="match status" value="1"/>
</dbReference>
<name>KGUA_CHLFF</name>
<proteinExistence type="inferred from homology"/>
<protein>
    <recommendedName>
        <fullName evidence="1">Guanylate kinase</fullName>
        <ecNumber evidence="1">2.7.4.8</ecNumber>
    </recommendedName>
    <alternativeName>
        <fullName evidence="1">GMP kinase</fullName>
    </alternativeName>
</protein>
<gene>
    <name evidence="1" type="primary">gmk</name>
    <name type="ordered locus">CF0358</name>
</gene>
<comment type="function">
    <text evidence="1">Essential for recycling GMP and indirectly, cGMP.</text>
</comment>
<comment type="catalytic activity">
    <reaction evidence="1">
        <text>GMP + ATP = GDP + ADP</text>
        <dbReference type="Rhea" id="RHEA:20780"/>
        <dbReference type="ChEBI" id="CHEBI:30616"/>
        <dbReference type="ChEBI" id="CHEBI:58115"/>
        <dbReference type="ChEBI" id="CHEBI:58189"/>
        <dbReference type="ChEBI" id="CHEBI:456216"/>
        <dbReference type="EC" id="2.7.4.8"/>
    </reaction>
</comment>
<comment type="subcellular location">
    <subcellularLocation>
        <location evidence="1">Cytoplasm</location>
    </subcellularLocation>
</comment>
<comment type="similarity">
    <text evidence="1">Belongs to the guanylate kinase family.</text>
</comment>
<accession>Q255A8</accession>
<sequence length="204" mass="23295">MKDKVSFPFSPDRPLCVPKLFTISAPAGAGKTTLVRMLAEEFPDSFQKTVSLTTRSPRPEEVHGVDYYFVSQEEFLKRLDSGDFLEWVALFGEYYGTSRLEIDKIWKSGKHAIAVIDVEGALALRSKIPTVTIFISAPSLEELERRLKHRGSEQDAQRQERLQHSLIEQAASSKFEYVIINDDLEKSYEILKSIFIAEEHRNVL</sequence>
<evidence type="ECO:0000255" key="1">
    <source>
        <dbReference type="HAMAP-Rule" id="MF_00328"/>
    </source>
</evidence>